<gene>
    <name type="primary">birc5.2-a</name>
    <name evidence="9" type="synonym">su1</name>
    <name evidence="8" type="synonym">svv2</name>
</gene>
<dbReference type="EMBL" id="AB197249">
    <property type="protein sequence ID" value="BAD98266.1"/>
    <property type="molecule type" value="mRNA"/>
</dbReference>
<dbReference type="EMBL" id="BC084306">
    <property type="protein sequence ID" value="AAH84306.1"/>
    <property type="status" value="ALT_INIT"/>
    <property type="molecule type" value="mRNA"/>
</dbReference>
<dbReference type="SMR" id="Q50L39"/>
<dbReference type="MEROPS" id="I32.005"/>
<dbReference type="AGR" id="Xenbase:XB-GENE-966748"/>
<dbReference type="Xenbase" id="XB-GENE-966748">
    <property type="gene designation" value="birc5l.L"/>
</dbReference>
<dbReference type="OrthoDB" id="6415325at2759"/>
<dbReference type="Proteomes" id="UP000186698">
    <property type="component" value="Unplaced"/>
</dbReference>
<dbReference type="GO" id="GO:0032133">
    <property type="term" value="C:chromosome passenger complex"/>
    <property type="evidence" value="ECO:0000250"/>
    <property type="project" value="UniProtKB"/>
</dbReference>
<dbReference type="GO" id="GO:0005737">
    <property type="term" value="C:cytoplasm"/>
    <property type="evidence" value="ECO:0000318"/>
    <property type="project" value="GO_Central"/>
</dbReference>
<dbReference type="GO" id="GO:0000776">
    <property type="term" value="C:kinetochore"/>
    <property type="evidence" value="ECO:0000250"/>
    <property type="project" value="UniProtKB"/>
</dbReference>
<dbReference type="GO" id="GO:0030496">
    <property type="term" value="C:midbody"/>
    <property type="evidence" value="ECO:0000250"/>
    <property type="project" value="UniProtKB"/>
</dbReference>
<dbReference type="GO" id="GO:0005634">
    <property type="term" value="C:nucleus"/>
    <property type="evidence" value="ECO:0000250"/>
    <property type="project" value="UniProtKB"/>
</dbReference>
<dbReference type="GO" id="GO:0051233">
    <property type="term" value="C:spindle midzone"/>
    <property type="evidence" value="ECO:0000318"/>
    <property type="project" value="GO_Central"/>
</dbReference>
<dbReference type="GO" id="GO:0046872">
    <property type="term" value="F:metal ion binding"/>
    <property type="evidence" value="ECO:0007669"/>
    <property type="project" value="UniProtKB-KW"/>
</dbReference>
<dbReference type="GO" id="GO:0046965">
    <property type="term" value="F:nuclear retinoid X receptor binding"/>
    <property type="evidence" value="ECO:0000250"/>
    <property type="project" value="UniProtKB"/>
</dbReference>
<dbReference type="GO" id="GO:0007059">
    <property type="term" value="P:chromosome segregation"/>
    <property type="evidence" value="ECO:0000318"/>
    <property type="project" value="GO_Central"/>
</dbReference>
<dbReference type="GO" id="GO:0000281">
    <property type="term" value="P:mitotic cytokinesis"/>
    <property type="evidence" value="ECO:0000318"/>
    <property type="project" value="GO_Central"/>
</dbReference>
<dbReference type="GO" id="GO:0007052">
    <property type="term" value="P:mitotic spindle organization"/>
    <property type="evidence" value="ECO:0000318"/>
    <property type="project" value="GO_Central"/>
</dbReference>
<dbReference type="GO" id="GO:0043066">
    <property type="term" value="P:negative regulation of apoptotic process"/>
    <property type="evidence" value="ECO:0000250"/>
    <property type="project" value="UniProtKB"/>
</dbReference>
<dbReference type="GO" id="GO:0045892">
    <property type="term" value="P:negative regulation of DNA-templated transcription"/>
    <property type="evidence" value="ECO:0000250"/>
    <property type="project" value="UniProtKB"/>
</dbReference>
<dbReference type="GO" id="GO:0001944">
    <property type="term" value="P:vasculature development"/>
    <property type="evidence" value="ECO:0000315"/>
    <property type="project" value="UniProtKB"/>
</dbReference>
<dbReference type="CDD" id="cd00022">
    <property type="entry name" value="BIR"/>
    <property type="match status" value="1"/>
</dbReference>
<dbReference type="FunFam" id="1.10.1170.10:FF:000009">
    <property type="entry name" value="Baculoviral IAP repeat-containing protein 5"/>
    <property type="match status" value="1"/>
</dbReference>
<dbReference type="Gene3D" id="1.10.1170.10">
    <property type="entry name" value="Inhibitor Of Apoptosis Protein (2mihbC-IAP-1), Chain A"/>
    <property type="match status" value="1"/>
</dbReference>
<dbReference type="InterPro" id="IPR051190">
    <property type="entry name" value="Baculoviral_IAP"/>
</dbReference>
<dbReference type="InterPro" id="IPR001370">
    <property type="entry name" value="BIR_rpt"/>
</dbReference>
<dbReference type="PANTHER" id="PTHR46771:SF3">
    <property type="entry name" value="BACULOVIRAL IAP REPEAT-CONTAINING PROTEIN 5"/>
    <property type="match status" value="1"/>
</dbReference>
<dbReference type="PANTHER" id="PTHR46771">
    <property type="entry name" value="DETERIN"/>
    <property type="match status" value="1"/>
</dbReference>
<dbReference type="Pfam" id="PF00653">
    <property type="entry name" value="BIR"/>
    <property type="match status" value="1"/>
</dbReference>
<dbReference type="SMART" id="SM00238">
    <property type="entry name" value="BIR"/>
    <property type="match status" value="1"/>
</dbReference>
<dbReference type="SUPFAM" id="SSF57924">
    <property type="entry name" value="Inhibitor of apoptosis (IAP) repeat"/>
    <property type="match status" value="1"/>
</dbReference>
<dbReference type="PROSITE" id="PS50143">
    <property type="entry name" value="BIR_REPEAT_2"/>
    <property type="match status" value="1"/>
</dbReference>
<protein>
    <recommendedName>
        <fullName>Baculoviral IAP repeat-containing protein 5.2-A</fullName>
    </recommendedName>
    <alternativeName>
        <fullName evidence="8">Survivin2-A</fullName>
        <shortName evidence="12">xSurvivin2A</shortName>
        <shortName evidence="8">xSvv2/SIX</shortName>
    </alternativeName>
    <alternativeName>
        <fullName evidence="9">xL_Survivin1</fullName>
        <shortName evidence="9">Su1</shortName>
    </alternativeName>
</protein>
<organism>
    <name type="scientific">Xenopus laevis</name>
    <name type="common">African clawed frog</name>
    <dbReference type="NCBI Taxonomy" id="8355"/>
    <lineage>
        <taxon>Eukaryota</taxon>
        <taxon>Metazoa</taxon>
        <taxon>Chordata</taxon>
        <taxon>Craniata</taxon>
        <taxon>Vertebrata</taxon>
        <taxon>Euteleostomi</taxon>
        <taxon>Amphibia</taxon>
        <taxon>Batrachia</taxon>
        <taxon>Anura</taxon>
        <taxon>Pipoidea</taxon>
        <taxon>Pipidae</taxon>
        <taxon>Xenopodinae</taxon>
        <taxon>Xenopus</taxon>
        <taxon>Xenopus</taxon>
    </lineage>
</organism>
<comment type="function">
    <text evidence="3 6 7">Component of the chromosomal passenger complex (CPC), a complex that acts as a key regulator of mitosis. The CPC complex has essential functions at the centromere in ensuring correct chromosome alignment and segregation and is required for chromatin-induced microtubule stabilization and spindle assembly (By similarity). Does not appear to exhibit anti-apoptotic activity. Plays a role in increasing blood vessel size during development.</text>
</comment>
<comment type="subunit">
    <text evidence="1">Component of the CPC at least composed of survivin/birc5, incenp, cdca8/borealin and/or cdca9/dasra-A, and aurkb/aurora-B. Interacts directly with incenp (via N-terminus). Interacts with rxra; the interaction is stronger in the absence of 9-cis retinoic acids (By similarity).</text>
</comment>
<comment type="subcellular location">
    <subcellularLocation>
        <location evidence="2">Cytoplasm</location>
    </subcellularLocation>
    <subcellularLocation>
        <location evidence="2">Nucleus</location>
    </subcellularLocation>
    <subcellularLocation>
        <location evidence="2">Chromosome</location>
        <location evidence="2">Centromere</location>
    </subcellularLocation>
    <subcellularLocation>
        <location evidence="1">Cytoplasm</location>
        <location evidence="1">Cytoskeleton</location>
        <location evidence="1">Spindle</location>
    </subcellularLocation>
    <text evidence="2">Localizes on chromosome arms and inner centromeres from prophase through metaphase and then transferring to the spindle midzone and midbody from anaphase through cytokinesis.</text>
</comment>
<comment type="tissue specificity">
    <text evidence="7">Highly expressed in vascular endothelial cells of tadpoles.</text>
</comment>
<comment type="developmental stage">
    <text evidence="6 7">Expressed both maternally and zygotically. Although many papers suggest that Xenopus survivins are not expressed in adults, PubMed:16759290 reports an increase in expression during metamorphosis, and expression in multiple adult tissues.</text>
</comment>
<comment type="domain">
    <text evidence="7">The BIR2 domain is required for vascular development.</text>
</comment>
<comment type="PTM">
    <text evidence="2">Ubiquitination is required for centrosome-targeting.</text>
</comment>
<comment type="similarity">
    <text evidence="4">Belongs to the IAP family.</text>
</comment>
<comment type="sequence caution" evidence="10">
    <conflict type="erroneous initiation">
        <sequence resource="EMBL-CDS" id="AAH84306"/>
    </conflict>
    <text>Truncated N-terminus.</text>
</comment>
<accession>Q50L39</accession>
<accession>Q5XGX1</accession>
<proteinExistence type="evidence at protein level"/>
<reference evidence="10 12" key="1">
    <citation type="journal article" date="2005" name="FEBS J.">
        <title>Apoptosis-inhibiting activities of BIR family proteins in Xenopus egg extracts.</title>
        <authorList>
            <person name="Tsuchiya Y."/>
            <person name="Murai S."/>
            <person name="Yamashita S."/>
        </authorList>
    </citation>
    <scope>NUCLEOTIDE SEQUENCE [MRNA]</scope>
    <scope>LACK OF ANTI-APOPTOTIC FUNCTION</scope>
    <scope>DEVELOPMENTAL STAGE</scope>
    <source>
        <tissue evidence="6">Oocyte</tissue>
    </source>
</reference>
<reference evidence="10" key="2">
    <citation type="journal article" date="2006" name="Differentiation">
        <title>Survivin increased vascular development during Xenopus ontogenesis.</title>
        <authorList>
            <person name="Du Pasquier D."/>
            <person name="Phung A.C."/>
            <person name="Ymlahi-Ouazzani Q."/>
            <person name="Sinzelle L."/>
            <person name="Ballagny C."/>
            <person name="Bronchain O."/>
            <person name="Du Pasquier L."/>
            <person name="Mazabraud A."/>
        </authorList>
    </citation>
    <scope>NUCLEOTIDE SEQUENCE [MRNA]</scope>
    <scope>FUNCTION</scope>
    <scope>TISSUE SPECIFICITY</scope>
    <scope>DEVELOPMENTAL STAGE</scope>
    <scope>MUTAGENESIS OF THR-47 AND CYS-97</scope>
    <source>
        <tissue evidence="7">Oocyte</tissue>
    </source>
</reference>
<reference evidence="11" key="3">
    <citation type="submission" date="2004-10" db="EMBL/GenBank/DDBJ databases">
        <authorList>
            <consortium name="NIH - Xenopus Gene Collection (XGC) project"/>
        </authorList>
    </citation>
    <scope>NUCLEOTIDE SEQUENCE [LARGE SCALE MRNA]</scope>
    <source>
        <tissue evidence="11">Embryo</tissue>
    </source>
</reference>
<keyword id="KW-0131">Cell cycle</keyword>
<keyword id="KW-0132">Cell division</keyword>
<keyword id="KW-0137">Centromere</keyword>
<keyword id="KW-0158">Chromosome</keyword>
<keyword id="KW-0159">Chromosome partition</keyword>
<keyword id="KW-0963">Cytoplasm</keyword>
<keyword id="KW-0206">Cytoskeleton</keyword>
<keyword id="KW-0479">Metal-binding</keyword>
<keyword id="KW-0498">Mitosis</keyword>
<keyword id="KW-0539">Nucleus</keyword>
<keyword id="KW-0597">Phosphoprotein</keyword>
<keyword id="KW-1185">Reference proteome</keyword>
<keyword id="KW-0832">Ubl conjugation</keyword>
<keyword id="KW-0862">Zinc</keyword>
<evidence type="ECO:0000250" key="1"/>
<evidence type="ECO:0000250" key="2">
    <source>
        <dbReference type="UniProtKB" id="O15392"/>
    </source>
</evidence>
<evidence type="ECO:0000250" key="3">
    <source>
        <dbReference type="UniProtKB" id="Q804H7"/>
    </source>
</evidence>
<evidence type="ECO:0000255" key="4"/>
<evidence type="ECO:0000255" key="5">
    <source>
        <dbReference type="PROSITE-ProRule" id="PRU00029"/>
    </source>
</evidence>
<evidence type="ECO:0000269" key="6">
    <source>
    </source>
</evidence>
<evidence type="ECO:0000269" key="7">
    <source>
    </source>
</evidence>
<evidence type="ECO:0000303" key="8">
    <source>
    </source>
</evidence>
<evidence type="ECO:0000303" key="9">
    <source>
    </source>
</evidence>
<evidence type="ECO:0000305" key="10"/>
<evidence type="ECO:0000312" key="11">
    <source>
        <dbReference type="EMBL" id="AAH84306.1"/>
    </source>
</evidence>
<evidence type="ECO:0000312" key="12">
    <source>
        <dbReference type="EMBL" id="BAD98266.1"/>
    </source>
</evidence>
<name>BI52A_XENLA</name>
<feature type="chain" id="PRO_0000382464" description="Baculoviral IAP repeat-containing protein 5.2-A">
    <location>
        <begin position="1"/>
        <end position="157"/>
    </location>
</feature>
<feature type="repeat" description="BIR" evidence="4">
    <location>
        <begin position="31"/>
        <end position="101"/>
    </location>
</feature>
<feature type="binding site" evidence="2 5">
    <location>
        <position position="70"/>
    </location>
    <ligand>
        <name>Zn(2+)</name>
        <dbReference type="ChEBI" id="CHEBI:29105"/>
    </ligand>
</feature>
<feature type="binding site" evidence="2 5">
    <location>
        <position position="73"/>
    </location>
    <ligand>
        <name>Zn(2+)</name>
        <dbReference type="ChEBI" id="CHEBI:29105"/>
    </ligand>
</feature>
<feature type="binding site" evidence="2 5">
    <location>
        <position position="90"/>
    </location>
    <ligand>
        <name>Zn(2+)</name>
        <dbReference type="ChEBI" id="CHEBI:29105"/>
    </ligand>
</feature>
<feature type="binding site" evidence="2 5">
    <location>
        <position position="97"/>
    </location>
    <ligand>
        <name>Zn(2+)</name>
        <dbReference type="ChEBI" id="CHEBI:29105"/>
    </ligand>
</feature>
<feature type="modified residue" description="Phosphothreonine; by CDK1" evidence="1">
    <location>
        <position position="47"/>
    </location>
</feature>
<feature type="mutagenesis site" description="Unable to increase blood vessel size." evidence="7">
    <original>T</original>
    <variation>A</variation>
    <location>
        <position position="47"/>
    </location>
</feature>
<feature type="mutagenesis site" description="Mimics phosphorylation. Only moderately able to increase blood vessel size." evidence="7">
    <original>T</original>
    <variation>E</variation>
    <location>
        <position position="47"/>
    </location>
</feature>
<feature type="mutagenesis site" description="Unable to increase blood vessel size." evidence="7">
    <original>C</original>
    <variation>A</variation>
    <location>
        <position position="97"/>
    </location>
</feature>
<feature type="sequence conflict" description="In Ref. 2." evidence="10" ref="2">
    <original>M</original>
    <variation>L</variation>
    <location>
        <position position="2"/>
    </location>
</feature>
<sequence>MMSISPIVSLRRCDNEPSMPDEWRLYKLASRLRTFSNWPFTEDCACTPERMAEAGFVHCPTDNSPDVVKCFFCLKELEGWQPEDDPMDEHKKHSPSCLFIALKKKAEELTLSEFLKLDLEHTKIKMQKQMNLHIERFQAKANEVRGHLEKLDADETQ</sequence>